<name>KDSB_BLOPB</name>
<keyword id="KW-0963">Cytoplasm</keyword>
<keyword id="KW-0448">Lipopolysaccharide biosynthesis</keyword>
<keyword id="KW-0548">Nucleotidyltransferase</keyword>
<keyword id="KW-1185">Reference proteome</keyword>
<keyword id="KW-0808">Transferase</keyword>
<feature type="chain" id="PRO_0000370005" description="3-deoxy-manno-octulosonate cytidylyltransferase">
    <location>
        <begin position="1"/>
        <end position="262"/>
    </location>
</feature>
<evidence type="ECO:0000255" key="1">
    <source>
        <dbReference type="HAMAP-Rule" id="MF_00057"/>
    </source>
</evidence>
<dbReference type="EC" id="2.7.7.38" evidence="1"/>
<dbReference type="EMBL" id="CP000016">
    <property type="protein sequence ID" value="AAZ41011.1"/>
    <property type="molecule type" value="Genomic_DNA"/>
</dbReference>
<dbReference type="RefSeq" id="WP_011282920.1">
    <property type="nucleotide sequence ID" value="NC_007292.1"/>
</dbReference>
<dbReference type="SMR" id="Q492T2"/>
<dbReference type="STRING" id="291272.BPEN_387"/>
<dbReference type="KEGG" id="bpn:BPEN_387"/>
<dbReference type="eggNOG" id="COG1212">
    <property type="taxonomic scope" value="Bacteria"/>
</dbReference>
<dbReference type="HOGENOM" id="CLU_065038_1_0_6"/>
<dbReference type="OrthoDB" id="9815559at2"/>
<dbReference type="UniPathway" id="UPA00030"/>
<dbReference type="UniPathway" id="UPA00358">
    <property type="reaction ID" value="UER00476"/>
</dbReference>
<dbReference type="Proteomes" id="UP000007794">
    <property type="component" value="Chromosome"/>
</dbReference>
<dbReference type="GO" id="GO:0005829">
    <property type="term" value="C:cytosol"/>
    <property type="evidence" value="ECO:0007669"/>
    <property type="project" value="TreeGrafter"/>
</dbReference>
<dbReference type="GO" id="GO:0008690">
    <property type="term" value="F:3-deoxy-manno-octulosonate cytidylyltransferase activity"/>
    <property type="evidence" value="ECO:0007669"/>
    <property type="project" value="UniProtKB-UniRule"/>
</dbReference>
<dbReference type="GO" id="GO:0033468">
    <property type="term" value="P:CMP-keto-3-deoxy-D-manno-octulosonic acid biosynthetic process"/>
    <property type="evidence" value="ECO:0007669"/>
    <property type="project" value="UniProtKB-UniRule"/>
</dbReference>
<dbReference type="GO" id="GO:0009103">
    <property type="term" value="P:lipopolysaccharide biosynthetic process"/>
    <property type="evidence" value="ECO:0007669"/>
    <property type="project" value="UniProtKB-UniRule"/>
</dbReference>
<dbReference type="CDD" id="cd02517">
    <property type="entry name" value="CMP-KDO-Synthetase"/>
    <property type="match status" value="1"/>
</dbReference>
<dbReference type="FunFam" id="3.90.550.10:FF:000011">
    <property type="entry name" value="3-deoxy-manno-octulosonate cytidylyltransferase"/>
    <property type="match status" value="1"/>
</dbReference>
<dbReference type="Gene3D" id="3.90.550.10">
    <property type="entry name" value="Spore Coat Polysaccharide Biosynthesis Protein SpsA, Chain A"/>
    <property type="match status" value="1"/>
</dbReference>
<dbReference type="HAMAP" id="MF_00057">
    <property type="entry name" value="KdsB"/>
    <property type="match status" value="1"/>
</dbReference>
<dbReference type="InterPro" id="IPR003329">
    <property type="entry name" value="Cytidylyl_trans"/>
</dbReference>
<dbReference type="InterPro" id="IPR004528">
    <property type="entry name" value="KdsB"/>
</dbReference>
<dbReference type="InterPro" id="IPR029044">
    <property type="entry name" value="Nucleotide-diphossugar_trans"/>
</dbReference>
<dbReference type="NCBIfam" id="TIGR00466">
    <property type="entry name" value="kdsB"/>
    <property type="match status" value="1"/>
</dbReference>
<dbReference type="NCBIfam" id="NF003952">
    <property type="entry name" value="PRK05450.1-5"/>
    <property type="match status" value="1"/>
</dbReference>
<dbReference type="PANTHER" id="PTHR42866">
    <property type="entry name" value="3-DEOXY-MANNO-OCTULOSONATE CYTIDYLYLTRANSFERASE"/>
    <property type="match status" value="1"/>
</dbReference>
<dbReference type="PANTHER" id="PTHR42866:SF2">
    <property type="entry name" value="3-DEOXY-MANNO-OCTULOSONATE CYTIDYLYLTRANSFERASE, MITOCHONDRIAL"/>
    <property type="match status" value="1"/>
</dbReference>
<dbReference type="Pfam" id="PF02348">
    <property type="entry name" value="CTP_transf_3"/>
    <property type="match status" value="1"/>
</dbReference>
<dbReference type="SUPFAM" id="SSF53448">
    <property type="entry name" value="Nucleotide-diphospho-sugar transferases"/>
    <property type="match status" value="1"/>
</dbReference>
<organism>
    <name type="scientific">Blochmanniella pennsylvanica (strain BPEN)</name>
    <dbReference type="NCBI Taxonomy" id="291272"/>
    <lineage>
        <taxon>Bacteria</taxon>
        <taxon>Pseudomonadati</taxon>
        <taxon>Pseudomonadota</taxon>
        <taxon>Gammaproteobacteria</taxon>
        <taxon>Enterobacterales</taxon>
        <taxon>Enterobacteriaceae</taxon>
        <taxon>ant endosymbionts</taxon>
        <taxon>Candidatus Blochmanniella</taxon>
    </lineage>
</organism>
<protein>
    <recommendedName>
        <fullName evidence="1">3-deoxy-manno-octulosonate cytidylyltransferase</fullName>
        <ecNumber evidence="1">2.7.7.38</ecNumber>
    </recommendedName>
    <alternativeName>
        <fullName evidence="1">CMP-2-keto-3-deoxyoctulosonic acid synthase</fullName>
        <shortName evidence="1">CKS</shortName>
        <shortName evidence="1">CMP-KDO synthase</shortName>
    </alternativeName>
</protein>
<accession>Q492T2</accession>
<gene>
    <name evidence="1" type="primary">kdsB</name>
    <name type="ordered locus">BPEN_387</name>
</gene>
<proteinExistence type="inferred from homology"/>
<comment type="function">
    <text evidence="1">Activates KDO (a required 8-carbon sugar) for incorporation into bacterial lipopolysaccharide in Gram-negative bacteria.</text>
</comment>
<comment type="catalytic activity">
    <reaction evidence="1">
        <text>3-deoxy-alpha-D-manno-oct-2-ulosonate + CTP = CMP-3-deoxy-beta-D-manno-octulosonate + diphosphate</text>
        <dbReference type="Rhea" id="RHEA:23448"/>
        <dbReference type="ChEBI" id="CHEBI:33019"/>
        <dbReference type="ChEBI" id="CHEBI:37563"/>
        <dbReference type="ChEBI" id="CHEBI:85986"/>
        <dbReference type="ChEBI" id="CHEBI:85987"/>
        <dbReference type="EC" id="2.7.7.38"/>
    </reaction>
</comment>
<comment type="pathway">
    <text evidence="1">Nucleotide-sugar biosynthesis; CMP-3-deoxy-D-manno-octulosonate biosynthesis; CMP-3-deoxy-D-manno-octulosonate from 3-deoxy-D-manno-octulosonate and CTP: step 1/1.</text>
</comment>
<comment type="pathway">
    <text evidence="1">Bacterial outer membrane biogenesis; lipopolysaccharide biosynthesis.</text>
</comment>
<comment type="subcellular location">
    <subcellularLocation>
        <location evidence="1">Cytoplasm</location>
    </subcellularLocation>
</comment>
<comment type="similarity">
    <text evidence="1">Belongs to the KdsB family.</text>
</comment>
<reference key="1">
    <citation type="journal article" date="2005" name="Genome Res.">
        <title>Genome sequence of Blochmannia pennsylvanicus indicates parallel evolutionary trends among bacterial mutualists of insects.</title>
        <authorList>
            <person name="Degnan P.H."/>
            <person name="Lazarus A.B."/>
            <person name="Wernegreen J.J."/>
        </authorList>
    </citation>
    <scope>NUCLEOTIDE SEQUENCE [LARGE SCALE GENOMIC DNA]</scope>
    <source>
        <strain>BPEN</strain>
    </source>
</reference>
<sequence length="262" mass="29527">MNFVVIIPVRFFSTRFPGKALADINGKPMIVRVMENALDSGANKVIIATDSSCIARVIESEQSESEVCLTRSTHQSGTERLAEVAINYKFSDDQIIVHLQGDEPLLSSTMIRQVASILCSMSSTISMATLATPLSSFKEARDDNVVKVVINMNSNALYFSRSMIPWNTGDFVNHLDSKFSKTLLRHIGIYAYRVKFLRRYIAWTKSPLEQIEHLEQLRVLWHGEAIHVSVIDDVFNISVDTPESLSRVNTVFKKNKYATVHN</sequence>